<feature type="chain" id="PRO_1000073598" description="Proline--tRNA ligase">
    <location>
        <begin position="1"/>
        <end position="478"/>
    </location>
</feature>
<comment type="function">
    <text evidence="1">Catalyzes the attachment of proline to tRNA(Pro) in a two-step reaction: proline is first activated by ATP to form Pro-AMP and then transferred to the acceptor end of tRNA(Pro).</text>
</comment>
<comment type="catalytic activity">
    <reaction evidence="1">
        <text>tRNA(Pro) + L-proline + ATP = L-prolyl-tRNA(Pro) + AMP + diphosphate</text>
        <dbReference type="Rhea" id="RHEA:14305"/>
        <dbReference type="Rhea" id="RHEA-COMP:9700"/>
        <dbReference type="Rhea" id="RHEA-COMP:9702"/>
        <dbReference type="ChEBI" id="CHEBI:30616"/>
        <dbReference type="ChEBI" id="CHEBI:33019"/>
        <dbReference type="ChEBI" id="CHEBI:60039"/>
        <dbReference type="ChEBI" id="CHEBI:78442"/>
        <dbReference type="ChEBI" id="CHEBI:78532"/>
        <dbReference type="ChEBI" id="CHEBI:456215"/>
        <dbReference type="EC" id="6.1.1.15"/>
    </reaction>
</comment>
<comment type="subunit">
    <text evidence="1">Homodimer.</text>
</comment>
<comment type="subcellular location">
    <subcellularLocation>
        <location evidence="1">Cytoplasm</location>
    </subcellularLocation>
</comment>
<comment type="domain">
    <text evidence="1">Consists of three domains: the N-terminal catalytic domain, the anticodon-binding domain and the C-terminal extension.</text>
</comment>
<comment type="similarity">
    <text evidence="1">Belongs to the class-II aminoacyl-tRNA synthetase family. ProS type 3 subfamily.</text>
</comment>
<dbReference type="EC" id="6.1.1.15" evidence="1"/>
<dbReference type="EMBL" id="CP000728">
    <property type="protein sequence ID" value="ABS39975.1"/>
    <property type="molecule type" value="Genomic_DNA"/>
</dbReference>
<dbReference type="RefSeq" id="WP_012101048.1">
    <property type="nucleotide sequence ID" value="NC_009699.1"/>
</dbReference>
<dbReference type="SMR" id="A7GIT0"/>
<dbReference type="KEGG" id="cbf:CLI_3517"/>
<dbReference type="HOGENOM" id="CLU_001882_4_2_9"/>
<dbReference type="Proteomes" id="UP000002410">
    <property type="component" value="Chromosome"/>
</dbReference>
<dbReference type="GO" id="GO:0017101">
    <property type="term" value="C:aminoacyl-tRNA synthetase multienzyme complex"/>
    <property type="evidence" value="ECO:0007669"/>
    <property type="project" value="TreeGrafter"/>
</dbReference>
<dbReference type="GO" id="GO:0005737">
    <property type="term" value="C:cytoplasm"/>
    <property type="evidence" value="ECO:0007669"/>
    <property type="project" value="UniProtKB-SubCell"/>
</dbReference>
<dbReference type="GO" id="GO:0005524">
    <property type="term" value="F:ATP binding"/>
    <property type="evidence" value="ECO:0007669"/>
    <property type="project" value="UniProtKB-UniRule"/>
</dbReference>
<dbReference type="GO" id="GO:0140096">
    <property type="term" value="F:catalytic activity, acting on a protein"/>
    <property type="evidence" value="ECO:0007669"/>
    <property type="project" value="UniProtKB-ARBA"/>
</dbReference>
<dbReference type="GO" id="GO:0004827">
    <property type="term" value="F:proline-tRNA ligase activity"/>
    <property type="evidence" value="ECO:0007669"/>
    <property type="project" value="UniProtKB-UniRule"/>
</dbReference>
<dbReference type="GO" id="GO:0016740">
    <property type="term" value="F:transferase activity"/>
    <property type="evidence" value="ECO:0007669"/>
    <property type="project" value="UniProtKB-ARBA"/>
</dbReference>
<dbReference type="GO" id="GO:0006433">
    <property type="term" value="P:prolyl-tRNA aminoacylation"/>
    <property type="evidence" value="ECO:0007669"/>
    <property type="project" value="UniProtKB-UniRule"/>
</dbReference>
<dbReference type="CDD" id="cd00862">
    <property type="entry name" value="ProRS_anticodon_zinc"/>
    <property type="match status" value="1"/>
</dbReference>
<dbReference type="CDD" id="cd00778">
    <property type="entry name" value="ProRS_core_arch_euk"/>
    <property type="match status" value="1"/>
</dbReference>
<dbReference type="FunFam" id="3.40.50.800:FF:000005">
    <property type="entry name" value="bifunctional glutamate/proline--tRNA ligase"/>
    <property type="match status" value="1"/>
</dbReference>
<dbReference type="FunFam" id="3.30.110.30:FF:000005">
    <property type="entry name" value="Proline--tRNA ligase"/>
    <property type="match status" value="1"/>
</dbReference>
<dbReference type="FunFam" id="3.30.930.10:FF:000023">
    <property type="entry name" value="Proline--tRNA ligase"/>
    <property type="match status" value="1"/>
</dbReference>
<dbReference type="Gene3D" id="3.40.50.800">
    <property type="entry name" value="Anticodon-binding domain"/>
    <property type="match status" value="1"/>
</dbReference>
<dbReference type="Gene3D" id="3.30.930.10">
    <property type="entry name" value="Bira Bifunctional Protein, Domain 2"/>
    <property type="match status" value="1"/>
</dbReference>
<dbReference type="Gene3D" id="3.30.110.30">
    <property type="entry name" value="C-terminal domain of ProRS"/>
    <property type="match status" value="1"/>
</dbReference>
<dbReference type="HAMAP" id="MF_01571">
    <property type="entry name" value="Pro_tRNA_synth_type3"/>
    <property type="match status" value="1"/>
</dbReference>
<dbReference type="InterPro" id="IPR002314">
    <property type="entry name" value="aa-tRNA-synt_IIb"/>
</dbReference>
<dbReference type="InterPro" id="IPR006195">
    <property type="entry name" value="aa-tRNA-synth_II"/>
</dbReference>
<dbReference type="InterPro" id="IPR045864">
    <property type="entry name" value="aa-tRNA-synth_II/BPL/LPL"/>
</dbReference>
<dbReference type="InterPro" id="IPR004154">
    <property type="entry name" value="Anticodon-bd"/>
</dbReference>
<dbReference type="InterPro" id="IPR036621">
    <property type="entry name" value="Anticodon-bd_dom_sf"/>
</dbReference>
<dbReference type="InterPro" id="IPR002316">
    <property type="entry name" value="Pro-tRNA-ligase_IIa"/>
</dbReference>
<dbReference type="InterPro" id="IPR004499">
    <property type="entry name" value="Pro-tRNA-ligase_IIa_arc-type"/>
</dbReference>
<dbReference type="InterPro" id="IPR016061">
    <property type="entry name" value="Pro-tRNA_ligase_II_C"/>
</dbReference>
<dbReference type="InterPro" id="IPR017449">
    <property type="entry name" value="Pro-tRNA_synth_II"/>
</dbReference>
<dbReference type="InterPro" id="IPR033721">
    <property type="entry name" value="ProRS_core_arch_euk"/>
</dbReference>
<dbReference type="NCBIfam" id="TIGR00408">
    <property type="entry name" value="proS_fam_I"/>
    <property type="match status" value="1"/>
</dbReference>
<dbReference type="PANTHER" id="PTHR43382:SF2">
    <property type="entry name" value="BIFUNCTIONAL GLUTAMATE_PROLINE--TRNA LIGASE"/>
    <property type="match status" value="1"/>
</dbReference>
<dbReference type="PANTHER" id="PTHR43382">
    <property type="entry name" value="PROLYL-TRNA SYNTHETASE"/>
    <property type="match status" value="1"/>
</dbReference>
<dbReference type="Pfam" id="PF03129">
    <property type="entry name" value="HGTP_anticodon"/>
    <property type="match status" value="1"/>
</dbReference>
<dbReference type="Pfam" id="PF09180">
    <property type="entry name" value="ProRS-C_1"/>
    <property type="match status" value="1"/>
</dbReference>
<dbReference type="Pfam" id="PF00587">
    <property type="entry name" value="tRNA-synt_2b"/>
    <property type="match status" value="1"/>
</dbReference>
<dbReference type="PRINTS" id="PR01046">
    <property type="entry name" value="TRNASYNTHPRO"/>
</dbReference>
<dbReference type="SMART" id="SM00946">
    <property type="entry name" value="ProRS-C_1"/>
    <property type="match status" value="1"/>
</dbReference>
<dbReference type="SUPFAM" id="SSF64586">
    <property type="entry name" value="C-terminal domain of ProRS"/>
    <property type="match status" value="1"/>
</dbReference>
<dbReference type="SUPFAM" id="SSF52954">
    <property type="entry name" value="Class II aaRS ABD-related"/>
    <property type="match status" value="1"/>
</dbReference>
<dbReference type="SUPFAM" id="SSF55681">
    <property type="entry name" value="Class II aaRS and biotin synthetases"/>
    <property type="match status" value="1"/>
</dbReference>
<dbReference type="PROSITE" id="PS50862">
    <property type="entry name" value="AA_TRNA_LIGASE_II"/>
    <property type="match status" value="1"/>
</dbReference>
<sequence>MAKDKKFVEDITPMDEDFAQWYTDIVKKAELADYSSIRGCMIIRPNGYAIWENIQKYVDTKLKEYGHENVSMPIFIPENLLQKEKDHVEGFAPEVAWVTHGGDDELAERLCVRPTSETLFCEHYAKIVQSYKDLPKLYNQWCSVVRWEKTTRPFLRTTEFLWQEGHTIHETKEEAESHSLKILNMYSRLCEDMLAMPVVMGKKTDKEKFAGADDTYTIESLMHDGKALQAGTSHYLGQNFSKAFAIQFSDRNGKLDYPHYTTWAVTTRLIGAIIMVHGDNSGLKLPPRIAPTQAVIIPVAQHKEGVLEKAEELKERLAKVVRVKLDDSDKMPGWKYSEYEMKGIPLRIEIGPKDIEKNQAVLVRRDNREKTIVSLDEIEIKVQEMLDIIHNSMLEEAKKTRDEKTYVATNMEEFEDTIENKPGFIKAMWCGDRACEDKIREVTGATSRCMPFEQEVVSDTCVCCGKKAKNLVYWGRAY</sequence>
<reference key="1">
    <citation type="submission" date="2007-06" db="EMBL/GenBank/DDBJ databases">
        <authorList>
            <person name="Brinkac L.M."/>
            <person name="Daugherty S."/>
            <person name="Dodson R.J."/>
            <person name="Madupu R."/>
            <person name="Brown J.L."/>
            <person name="Bruce D."/>
            <person name="Detter C."/>
            <person name="Munk C."/>
            <person name="Smith L.A."/>
            <person name="Smith T.J."/>
            <person name="White O."/>
            <person name="Brettin T.S."/>
        </authorList>
    </citation>
    <scope>NUCLEOTIDE SEQUENCE [LARGE SCALE GENOMIC DNA]</scope>
    <source>
        <strain>Langeland / NCTC 10281 / Type F</strain>
    </source>
</reference>
<protein>
    <recommendedName>
        <fullName evidence="1">Proline--tRNA ligase</fullName>
        <ecNumber evidence="1">6.1.1.15</ecNumber>
    </recommendedName>
    <alternativeName>
        <fullName evidence="1">Prolyl-tRNA synthetase</fullName>
        <shortName evidence="1">ProRS</shortName>
    </alternativeName>
</protein>
<gene>
    <name evidence="1" type="primary">proS</name>
    <name type="ordered locus">CLI_3517</name>
</gene>
<accession>A7GIT0</accession>
<proteinExistence type="inferred from homology"/>
<organism>
    <name type="scientific">Clostridium botulinum (strain Langeland / NCTC 10281 / Type F)</name>
    <dbReference type="NCBI Taxonomy" id="441772"/>
    <lineage>
        <taxon>Bacteria</taxon>
        <taxon>Bacillati</taxon>
        <taxon>Bacillota</taxon>
        <taxon>Clostridia</taxon>
        <taxon>Eubacteriales</taxon>
        <taxon>Clostridiaceae</taxon>
        <taxon>Clostridium</taxon>
    </lineage>
</organism>
<keyword id="KW-0030">Aminoacyl-tRNA synthetase</keyword>
<keyword id="KW-0067">ATP-binding</keyword>
<keyword id="KW-0963">Cytoplasm</keyword>
<keyword id="KW-0436">Ligase</keyword>
<keyword id="KW-0547">Nucleotide-binding</keyword>
<keyword id="KW-0648">Protein biosynthesis</keyword>
<name>SYP_CLOBL</name>
<evidence type="ECO:0000255" key="1">
    <source>
        <dbReference type="HAMAP-Rule" id="MF_01571"/>
    </source>
</evidence>